<name>RPB3_HUMAN</name>
<proteinExistence type="evidence at protein level"/>
<evidence type="ECO:0000250" key="1">
    <source>
        <dbReference type="UniProtKB" id="P97760"/>
    </source>
</evidence>
<evidence type="ECO:0000256" key="2">
    <source>
        <dbReference type="SAM" id="MobiDB-lite"/>
    </source>
</evidence>
<evidence type="ECO:0000269" key="3">
    <source>
    </source>
</evidence>
<evidence type="ECO:0000269" key="4">
    <source>
    </source>
</evidence>
<evidence type="ECO:0000269" key="5">
    <source>
    </source>
</evidence>
<evidence type="ECO:0000269" key="6">
    <source>
    </source>
</evidence>
<evidence type="ECO:0000269" key="7">
    <source ref="6"/>
</evidence>
<evidence type="ECO:0000305" key="8"/>
<evidence type="ECO:0000312" key="9">
    <source>
        <dbReference type="HGNC" id="HGNC:9189"/>
    </source>
</evidence>
<evidence type="ECO:0007744" key="10">
    <source>
        <dbReference type="PDB" id="5IY6"/>
    </source>
</evidence>
<evidence type="ECO:0007744" key="11">
    <source>
    </source>
</evidence>
<evidence type="ECO:0007744" key="12">
    <source>
    </source>
</evidence>
<reference key="1">
    <citation type="journal article" date="1990" name="J. Biol. Chem.">
        <title>The amino acid sequence of the human RNA polymerase II 33-kDa subunit hRPB 33 is highly conserved among eukaryotes.</title>
        <authorList>
            <person name="Pati U.K."/>
            <person name="Weissman S.M."/>
        </authorList>
    </citation>
    <scope>NUCLEOTIDE SEQUENCE [MRNA]</scope>
</reference>
<reference key="2">
    <citation type="journal article" date="1998" name="Biochim. Biophys. Acta">
        <title>Cloning and characterization of the human RNA polymerase I subunit hRPA40.</title>
        <authorList>
            <person name="Dammann R."/>
            <person name="Pfeifer G.P."/>
        </authorList>
    </citation>
    <scope>NUCLEOTIDE SEQUENCE [MRNA]</scope>
</reference>
<reference key="3">
    <citation type="submission" date="1998-02" db="EMBL/GenBank/DDBJ databases">
        <authorList>
            <person name="Bruno T."/>
            <person name="di Padova M."/>
            <person name="de Angelis R."/>
            <person name="Iacobini C."/>
            <person name="Lovari S."/>
            <person name="Passananti C."/>
            <person name="Fanciulli M."/>
        </authorList>
    </citation>
    <scope>NUCLEOTIDE SEQUENCE [MRNA]</scope>
    <source>
        <tissue>Skeletal muscle</tissue>
    </source>
</reference>
<reference key="4">
    <citation type="journal article" date="1999" name="Genomics">
        <title>Genome duplications and other features in 12 Mb of DNA sequence from human chromosome 16p and 16q.</title>
        <authorList>
            <person name="Loftus B.J."/>
            <person name="Kim U.-J."/>
            <person name="Sneddon V.P."/>
            <person name="Kalush F."/>
            <person name="Brandon R."/>
            <person name="Fuhrmann J."/>
            <person name="Mason T."/>
            <person name="Crosby M.L."/>
            <person name="Barnstead M."/>
            <person name="Cronin L."/>
            <person name="Mays A.D."/>
            <person name="Cao Y."/>
            <person name="Xu R.X."/>
            <person name="Kang H.-L."/>
            <person name="Mitchell S."/>
            <person name="Eichler E.E."/>
            <person name="Harris P.C."/>
            <person name="Venter J.C."/>
            <person name="Adams M.D."/>
        </authorList>
    </citation>
    <scope>NUCLEOTIDE SEQUENCE [LARGE SCALE GENOMIC DNA]</scope>
</reference>
<reference key="5">
    <citation type="journal article" date="2004" name="Genome Res.">
        <title>The status, quality, and expansion of the NIH full-length cDNA project: the Mammalian Gene Collection (MGC).</title>
        <authorList>
            <consortium name="The MGC Project Team"/>
        </authorList>
    </citation>
    <scope>NUCLEOTIDE SEQUENCE [LARGE SCALE MRNA]</scope>
    <source>
        <tissue>Brain</tissue>
        <tissue>Kidney</tissue>
        <tissue>Muscle</tissue>
    </source>
</reference>
<reference key="6">
    <citation type="submission" date="2009-03" db="UniProtKB">
        <authorList>
            <person name="Bienvenut W.V."/>
            <person name="Waridel P."/>
            <person name="Quadroni M."/>
        </authorList>
    </citation>
    <scope>PROTEIN SEQUENCE OF 2-35; 68-86; 134-152; 176-193 AND 256-275</scope>
    <scope>CLEAVAGE OF INITIATOR METHIONINE</scope>
    <scope>IDENTIFICATION BY MASS SPECTROMETRY</scope>
    <source>
        <tissue>Embryonic kidney</tissue>
    </source>
</reference>
<reference key="7">
    <citation type="journal article" date="1998" name="J. Biol. Chem.">
        <title>Immunoaffinity purification and functional characterization of human transcription factor IIH and RNA polymerase II from clonal cell lines that conditionally express epitope-tagged subunits of the multiprotein complexes.</title>
        <authorList>
            <person name="Kershnar E."/>
            <person name="Wu S.-Y."/>
            <person name="Chiang C.-M."/>
        </authorList>
    </citation>
    <scope>FUNCTION</scope>
    <scope>IDENTIFICATION IN THE RNA POLYMERASE II CORE-COMPLEX</scope>
    <scope>SUBCELLULAR LOCATION</scope>
</reference>
<reference key="8">
    <citation type="journal article" date="2008" name="Proc. Natl. Acad. Sci. U.S.A.">
        <title>A quantitative atlas of mitotic phosphorylation.</title>
        <authorList>
            <person name="Dephoure N."/>
            <person name="Zhou C."/>
            <person name="Villen J."/>
            <person name="Beausoleil S.A."/>
            <person name="Bakalarski C.E."/>
            <person name="Elledge S.J."/>
            <person name="Gygi S.P."/>
        </authorList>
    </citation>
    <scope>PHOSPHORYLATION [LARGE SCALE ANALYSIS] AT SER-124</scope>
    <scope>IDENTIFICATION BY MASS SPECTROMETRY [LARGE SCALE ANALYSIS]</scope>
    <source>
        <tissue>Cervix carcinoma</tissue>
    </source>
</reference>
<reference key="9">
    <citation type="journal article" date="2011" name="BMC Syst. Biol.">
        <title>Initial characterization of the human central proteome.</title>
        <authorList>
            <person name="Burkard T.R."/>
            <person name="Planyavsky M."/>
            <person name="Kaupe I."/>
            <person name="Breitwieser F.P."/>
            <person name="Buerckstuemmer T."/>
            <person name="Bennett K.L."/>
            <person name="Superti-Furga G."/>
            <person name="Colinge J."/>
        </authorList>
    </citation>
    <scope>IDENTIFICATION BY MASS SPECTROMETRY [LARGE SCALE ANALYSIS]</scope>
</reference>
<reference key="10">
    <citation type="journal article" date="2012" name="Proc. Natl. Acad. Sci. U.S.A.">
        <title>N-terminal acetylome analyses and functional insights of the N-terminal acetyltransferase NatB.</title>
        <authorList>
            <person name="Van Damme P."/>
            <person name="Lasa M."/>
            <person name="Polevoda B."/>
            <person name="Gazquez C."/>
            <person name="Elosegui-Artola A."/>
            <person name="Kim D.S."/>
            <person name="De Juan-Pardo E."/>
            <person name="Demeyer K."/>
            <person name="Hole K."/>
            <person name="Larrea E."/>
            <person name="Timmerman E."/>
            <person name="Prieto J."/>
            <person name="Arnesen T."/>
            <person name="Sherman F."/>
            <person name="Gevaert K."/>
            <person name="Aldabe R."/>
        </authorList>
    </citation>
    <scope>IDENTIFICATION BY MASS SPECTROMETRY [LARGE SCALE ANALYSIS]</scope>
</reference>
<reference key="11">
    <citation type="journal article" date="2014" name="J. Proteomics">
        <title>An enzyme assisted RP-RPLC approach for in-depth analysis of human liver phosphoproteome.</title>
        <authorList>
            <person name="Bian Y."/>
            <person name="Song C."/>
            <person name="Cheng K."/>
            <person name="Dong M."/>
            <person name="Wang F."/>
            <person name="Huang J."/>
            <person name="Sun D."/>
            <person name="Wang L."/>
            <person name="Ye M."/>
            <person name="Zou H."/>
        </authorList>
    </citation>
    <scope>PHOSPHORYLATION [LARGE SCALE ANALYSIS] AT SER-257</scope>
    <scope>IDENTIFICATION BY MASS SPECTROMETRY [LARGE SCALE ANALYSIS]</scope>
    <source>
        <tissue>Liver</tissue>
    </source>
</reference>
<reference key="12">
    <citation type="journal article" date="2023" name="J. Biol. Chem.">
        <title>SHP-1 phosphatase acts as a coactivator of PCK1 transcription to control gluconeogenesis.</title>
        <authorList>
            <person name="Kumar A."/>
            <person name="Schwab M."/>
            <person name="Laborit Labrada B."/>
            <person name="Silveira M.A.D."/>
            <person name="Goudreault M."/>
            <person name="Fournier E."/>
            <person name="Bellmann K."/>
            <person name="Beauchemin N."/>
            <person name="Gingras A.C."/>
            <person name="Bilodeau S."/>
            <person name="Laplante M."/>
            <person name="Marette A."/>
        </authorList>
    </citation>
    <scope>FUNCTION</scope>
    <scope>INTERACTION WITH PTPN6</scope>
</reference>
<reference key="13">
    <citation type="journal article" date="2016" name="Nature">
        <title>Near-atomic resolution visualization of human transcription promoter opening.</title>
        <authorList>
            <person name="He Y."/>
            <person name="Yan C."/>
            <person name="Fang J."/>
            <person name="Inouye C."/>
            <person name="Tjian R."/>
            <person name="Ivanov I."/>
            <person name="Nogales E."/>
        </authorList>
    </citation>
    <scope>STRUCTURE BY ELECTRON MICROSCOPY (3.90 ANGSTROMS) IN COMPLEX WITH ZN(2+)</scope>
    <scope>FUNCTION OF POL II</scope>
    <scope>SUBUNIT</scope>
</reference>
<reference key="14">
    <citation type="journal article" date="2018" name="Nat. Struct. Mol. Biol.">
        <title>Architecture of Pol II(G) and molecular mechanism of transcription regulation by Gdown1.</title>
        <authorList>
            <person name="Jishage M."/>
            <person name="Yu X."/>
            <person name="Shi Y."/>
            <person name="Ganesan S.J."/>
            <person name="Chen W.Y."/>
            <person name="Sali A."/>
            <person name="Chait B.T."/>
            <person name="Asturias F.J."/>
            <person name="Roeder R.G."/>
        </authorList>
    </citation>
    <scope>STRUCTURE BY ELECTRON MICROSCOPY (3.90 ANGSTROMS)</scope>
    <scope>FUNCTION OF POL II</scope>
    <scope>SUBUNIT</scope>
</reference>
<comment type="function">
    <text evidence="3 4 5 6">Core component of RNA polymerase II (Pol II), a DNA-dependent RNA polymerase which synthesizes mRNA precursors and many functional non-coding RNAs using the four ribonucleoside triphosphates as substrates.</text>
</comment>
<comment type="subunit">
    <text evidence="3 4 5 6">Component of the RNA polymerase II (Pol II) core complex consisting of 12 subunits: a ten-subunit catalytic core composed of POLR2A/RPB1, POLR2B/RPB2, POLR2C/RPB3, POLR2I/RPB9, POLR2J/RPB11, POLR2E/RPABC1, POLR2F/RPABC2, POLR2H/RPABC3, POLR2K/RPABC4 and POLR2L/RPABC5 and a mobile stalk composed of two subunits POLR2D/RPB4 and POLR2G/RPB7, protruding from the core and functioning primarily in transcription initiation. Part of Pol II(G) complex, in which Pol II core associates with an additional subunit POLR2M; unlike conventional Pol II, Pol II(G) functions as a transcriptional repressor. Part of TBP-based Pol II pre-initiation complex (PIC), in which Pol II core assembles with general transcription factors and other specific initiation factors including GTF2E1, GTF2E2, GTF2F1, GTF2F2, TCEA1, ERCC2, ERCC3, GTF2H2, GTF2H3, GTF2H4, GTF2H5, GTF2A1, GTF2A2, GTF2B and TBP; this large multi-subunit PIC complex mediates DNA unwinding and targets Pol II core to the transcription start site where the first phosphodiester bond forms. Interacts with PTPN6; this interaction promotes the recruitment of RNA pol II to the PCK1 promoter (PubMed:37595871).</text>
</comment>
<comment type="interaction">
    <interactant intactId="EBI-394729">
        <id>P19387</id>
    </interactant>
    <interactant intactId="EBI-492498">
        <id>P18848</id>
        <label>ATF4</label>
    </interactant>
    <organismsDiffer>false</organismsDiffer>
    <experiments>6</experiments>
</comment>
<comment type="subcellular location">
    <subcellularLocation>
        <location evidence="6">Nucleus</location>
    </subcellularLocation>
</comment>
<comment type="similarity">
    <text evidence="8">Belongs to the archaeal Rpo3/eukaryotic RPB3 RNA polymerase subunit family.</text>
</comment>
<keyword id="KW-0002">3D-structure</keyword>
<keyword id="KW-0903">Direct protein sequencing</keyword>
<keyword id="KW-0240">DNA-directed RNA polymerase</keyword>
<keyword id="KW-0539">Nucleus</keyword>
<keyword id="KW-0597">Phosphoprotein</keyword>
<keyword id="KW-1267">Proteomics identification</keyword>
<keyword id="KW-1185">Reference proteome</keyword>
<keyword id="KW-0804">Transcription</keyword>
<accession>P19387</accession>
<accession>O15161</accession>
<gene>
    <name evidence="9" type="primary">POLR2C</name>
    <name type="ORF">A-152E5.7</name>
</gene>
<organism>
    <name type="scientific">Homo sapiens</name>
    <name type="common">Human</name>
    <dbReference type="NCBI Taxonomy" id="9606"/>
    <lineage>
        <taxon>Eukaryota</taxon>
        <taxon>Metazoa</taxon>
        <taxon>Chordata</taxon>
        <taxon>Craniata</taxon>
        <taxon>Vertebrata</taxon>
        <taxon>Euteleostomi</taxon>
        <taxon>Mammalia</taxon>
        <taxon>Eutheria</taxon>
        <taxon>Euarchontoglires</taxon>
        <taxon>Primates</taxon>
        <taxon>Haplorrhini</taxon>
        <taxon>Catarrhini</taxon>
        <taxon>Hominidae</taxon>
        <taxon>Homo</taxon>
    </lineage>
</organism>
<dbReference type="EMBL" id="J05448">
    <property type="protein sequence ID" value="AAA36586.1"/>
    <property type="molecule type" value="mRNA"/>
</dbReference>
<dbReference type="EMBL" id="AF008443">
    <property type="protein sequence ID" value="AAC14355.1"/>
    <property type="molecule type" value="mRNA"/>
</dbReference>
<dbReference type="EMBL" id="AJ224143">
    <property type="protein sequence ID" value="CAA11842.1"/>
    <property type="molecule type" value="mRNA"/>
</dbReference>
<dbReference type="EMBL" id="AJ224144">
    <property type="protein sequence ID" value="CAA11843.1"/>
    <property type="molecule type" value="mRNA"/>
</dbReference>
<dbReference type="EMBL" id="AC004382">
    <property type="protein sequence ID" value="AAC24309.1"/>
    <property type="molecule type" value="Genomic_DNA"/>
</dbReference>
<dbReference type="EMBL" id="BC000409">
    <property type="protein sequence ID" value="AAH00409.1"/>
    <property type="molecule type" value="mRNA"/>
</dbReference>
<dbReference type="EMBL" id="BC003159">
    <property type="protein sequence ID" value="AAH03159.1"/>
    <property type="molecule type" value="mRNA"/>
</dbReference>
<dbReference type="EMBL" id="BC028157">
    <property type="protein sequence ID" value="AAH28157.1"/>
    <property type="molecule type" value="mRNA"/>
</dbReference>
<dbReference type="CCDS" id="CCDS10782.1"/>
<dbReference type="PIR" id="A36264">
    <property type="entry name" value="A36264"/>
</dbReference>
<dbReference type="RefSeq" id="NP_116558.1">
    <property type="nucleotide sequence ID" value="NM_032940.3"/>
</dbReference>
<dbReference type="PDB" id="5IY6">
    <property type="method" value="EM"/>
    <property type="resolution" value="7.20 A"/>
    <property type="chains" value="C=1-275"/>
</dbReference>
<dbReference type="PDB" id="5IY7">
    <property type="method" value="EM"/>
    <property type="resolution" value="8.60 A"/>
    <property type="chains" value="C=1-275"/>
</dbReference>
<dbReference type="PDB" id="5IY8">
    <property type="method" value="EM"/>
    <property type="resolution" value="7.90 A"/>
    <property type="chains" value="C=1-275"/>
</dbReference>
<dbReference type="PDB" id="5IY9">
    <property type="method" value="EM"/>
    <property type="resolution" value="6.30 A"/>
    <property type="chains" value="C=1-275"/>
</dbReference>
<dbReference type="PDB" id="5IYA">
    <property type="method" value="EM"/>
    <property type="resolution" value="5.40 A"/>
    <property type="chains" value="C=1-275"/>
</dbReference>
<dbReference type="PDB" id="5IYB">
    <property type="method" value="EM"/>
    <property type="resolution" value="3.90 A"/>
    <property type="chains" value="C=1-275"/>
</dbReference>
<dbReference type="PDB" id="5IYC">
    <property type="method" value="EM"/>
    <property type="resolution" value="3.90 A"/>
    <property type="chains" value="C=1-275"/>
</dbReference>
<dbReference type="PDB" id="5IYD">
    <property type="method" value="EM"/>
    <property type="resolution" value="3.90 A"/>
    <property type="chains" value="C=1-275"/>
</dbReference>
<dbReference type="PDB" id="6DRD">
    <property type="method" value="EM"/>
    <property type="resolution" value="3.90 A"/>
    <property type="chains" value="C=1-275"/>
</dbReference>
<dbReference type="PDB" id="6O9L">
    <property type="method" value="EM"/>
    <property type="resolution" value="7.20 A"/>
    <property type="chains" value="C=1-275"/>
</dbReference>
<dbReference type="PDB" id="6XRE">
    <property type="method" value="EM"/>
    <property type="resolution" value="4.60 A"/>
    <property type="chains" value="C=1-275"/>
</dbReference>
<dbReference type="PDB" id="7LBM">
    <property type="method" value="EM"/>
    <property type="resolution" value="4.80 A"/>
    <property type="chains" value="C=1-275"/>
</dbReference>
<dbReference type="PDB" id="9EHZ">
    <property type="method" value="EM"/>
    <property type="resolution" value="2.60 A"/>
    <property type="chains" value="C=1-275"/>
</dbReference>
<dbReference type="PDB" id="9EI1">
    <property type="method" value="EM"/>
    <property type="resolution" value="3.20 A"/>
    <property type="chains" value="C=1-275"/>
</dbReference>
<dbReference type="PDB" id="9EI3">
    <property type="method" value="EM"/>
    <property type="resolution" value="3.20 A"/>
    <property type="chains" value="C=1-275"/>
</dbReference>
<dbReference type="PDB" id="9EI4">
    <property type="method" value="EM"/>
    <property type="resolution" value="3.70 A"/>
    <property type="chains" value="C=1-275"/>
</dbReference>
<dbReference type="PDBsum" id="5IY6"/>
<dbReference type="PDBsum" id="5IY7"/>
<dbReference type="PDBsum" id="5IY8"/>
<dbReference type="PDBsum" id="5IY9"/>
<dbReference type="PDBsum" id="5IYA"/>
<dbReference type="PDBsum" id="5IYB"/>
<dbReference type="PDBsum" id="5IYC"/>
<dbReference type="PDBsum" id="5IYD"/>
<dbReference type="PDBsum" id="6DRD"/>
<dbReference type="PDBsum" id="6O9L"/>
<dbReference type="PDBsum" id="6XRE"/>
<dbReference type="PDBsum" id="7LBM"/>
<dbReference type="PDBsum" id="9EHZ"/>
<dbReference type="PDBsum" id="9EI1"/>
<dbReference type="PDBsum" id="9EI3"/>
<dbReference type="PDBsum" id="9EI4"/>
<dbReference type="EMDB" id="EMD-22294"/>
<dbReference type="EMDB" id="EMD-23255"/>
<dbReference type="EMDB" id="EMD-48071"/>
<dbReference type="EMDB" id="EMD-48073"/>
<dbReference type="EMDB" id="EMD-48075"/>
<dbReference type="EMDB" id="EMD-48076"/>
<dbReference type="EMDB" id="EMD-7997"/>
<dbReference type="EMDB" id="EMD-8132"/>
<dbReference type="EMDB" id="EMD-8133"/>
<dbReference type="EMDB" id="EMD-8134"/>
<dbReference type="EMDB" id="EMD-8135"/>
<dbReference type="EMDB" id="EMD-8136"/>
<dbReference type="EMDB" id="EMD-8137"/>
<dbReference type="EMDB" id="EMD-8138"/>
<dbReference type="SMR" id="P19387"/>
<dbReference type="BioGRID" id="111428">
    <property type="interactions" value="347"/>
</dbReference>
<dbReference type="ComplexPortal" id="CPX-2387">
    <property type="entry name" value="DNA-directed RNA polymerase II complex, Pol II(G) variant"/>
</dbReference>
<dbReference type="ComplexPortal" id="CPX-7481">
    <property type="entry name" value="DNA-directed RNA polymerase II complex"/>
</dbReference>
<dbReference type="CORUM" id="P19387"/>
<dbReference type="DIP" id="DIP-32911N"/>
<dbReference type="FunCoup" id="P19387">
    <property type="interactions" value="3875"/>
</dbReference>
<dbReference type="IntAct" id="P19387">
    <property type="interactions" value="136"/>
</dbReference>
<dbReference type="MINT" id="P19387"/>
<dbReference type="STRING" id="9606.ENSP00000219252"/>
<dbReference type="GlyGen" id="P19387">
    <property type="glycosylation" value="1 site, 1 O-linked glycan (1 site)"/>
</dbReference>
<dbReference type="iPTMnet" id="P19387"/>
<dbReference type="PhosphoSitePlus" id="P19387"/>
<dbReference type="SwissPalm" id="P19387"/>
<dbReference type="BioMuta" id="POLR2C"/>
<dbReference type="DMDM" id="3915850"/>
<dbReference type="jPOST" id="P19387"/>
<dbReference type="MassIVE" id="P19387"/>
<dbReference type="PaxDb" id="9606-ENSP00000219252"/>
<dbReference type="PeptideAtlas" id="P19387"/>
<dbReference type="ProteomicsDB" id="53652"/>
<dbReference type="Pumba" id="P19387"/>
<dbReference type="Antibodypedia" id="28873">
    <property type="antibodies" value="180 antibodies from 27 providers"/>
</dbReference>
<dbReference type="DNASU" id="5432"/>
<dbReference type="Ensembl" id="ENST00000219252.10">
    <property type="protein sequence ID" value="ENSP00000219252.4"/>
    <property type="gene ID" value="ENSG00000102978.13"/>
</dbReference>
<dbReference type="GeneID" id="5432"/>
<dbReference type="KEGG" id="hsa:5432"/>
<dbReference type="MANE-Select" id="ENST00000219252.10">
    <property type="protein sequence ID" value="ENSP00000219252.4"/>
    <property type="RefSeq nucleotide sequence ID" value="NM_032940.3"/>
    <property type="RefSeq protein sequence ID" value="NP_116558.1"/>
</dbReference>
<dbReference type="AGR" id="HGNC:9189"/>
<dbReference type="CTD" id="5432"/>
<dbReference type="DisGeNET" id="5432"/>
<dbReference type="GeneCards" id="POLR2C"/>
<dbReference type="HGNC" id="HGNC:9189">
    <property type="gene designation" value="POLR2C"/>
</dbReference>
<dbReference type="HPA" id="ENSG00000102978">
    <property type="expression patterns" value="Low tissue specificity"/>
</dbReference>
<dbReference type="MalaCards" id="POLR2C"/>
<dbReference type="MIM" id="180663">
    <property type="type" value="gene"/>
</dbReference>
<dbReference type="neXtProt" id="NX_P19387"/>
<dbReference type="OpenTargets" id="ENSG00000102978"/>
<dbReference type="PharmGKB" id="PA33509"/>
<dbReference type="VEuPathDB" id="HostDB:ENSG00000102978"/>
<dbReference type="eggNOG" id="KOG1522">
    <property type="taxonomic scope" value="Eukaryota"/>
</dbReference>
<dbReference type="GeneTree" id="ENSGT00950000183100"/>
<dbReference type="HOGENOM" id="CLU_038421_1_0_1"/>
<dbReference type="InParanoid" id="P19387"/>
<dbReference type="OMA" id="FYFEVES"/>
<dbReference type="OrthoDB" id="270173at2759"/>
<dbReference type="PAN-GO" id="P19387">
    <property type="GO annotations" value="2 GO annotations based on evolutionary models"/>
</dbReference>
<dbReference type="PhylomeDB" id="P19387"/>
<dbReference type="TreeFam" id="TF103038"/>
<dbReference type="PathwayCommons" id="P19387"/>
<dbReference type="Reactome" id="R-HSA-112382">
    <property type="pathway name" value="Formation of RNA Pol II elongation complex"/>
</dbReference>
<dbReference type="Reactome" id="R-HSA-113418">
    <property type="pathway name" value="Formation of the Early Elongation Complex"/>
</dbReference>
<dbReference type="Reactome" id="R-HSA-167152">
    <property type="pathway name" value="Formation of HIV elongation complex in the absence of HIV Tat"/>
</dbReference>
<dbReference type="Reactome" id="R-HSA-167158">
    <property type="pathway name" value="Formation of the HIV-1 Early Elongation Complex"/>
</dbReference>
<dbReference type="Reactome" id="R-HSA-167160">
    <property type="pathway name" value="RNA Pol II CTD phosphorylation and interaction with CE during HIV infection"/>
</dbReference>
<dbReference type="Reactome" id="R-HSA-167161">
    <property type="pathway name" value="HIV Transcription Initiation"/>
</dbReference>
<dbReference type="Reactome" id="R-HSA-167162">
    <property type="pathway name" value="RNA Polymerase II HIV Promoter Escape"/>
</dbReference>
<dbReference type="Reactome" id="R-HSA-167172">
    <property type="pathway name" value="Transcription of the HIV genome"/>
</dbReference>
<dbReference type="Reactome" id="R-HSA-167200">
    <property type="pathway name" value="Formation of HIV-1 elongation complex containing HIV-1 Tat"/>
</dbReference>
<dbReference type="Reactome" id="R-HSA-167238">
    <property type="pathway name" value="Pausing and recovery of Tat-mediated HIV elongation"/>
</dbReference>
<dbReference type="Reactome" id="R-HSA-167242">
    <property type="pathway name" value="Abortive elongation of HIV-1 transcript in the absence of Tat"/>
</dbReference>
<dbReference type="Reactome" id="R-HSA-167243">
    <property type="pathway name" value="Tat-mediated HIV elongation arrest and recovery"/>
</dbReference>
<dbReference type="Reactome" id="R-HSA-167246">
    <property type="pathway name" value="Tat-mediated elongation of the HIV-1 transcript"/>
</dbReference>
<dbReference type="Reactome" id="R-HSA-167287">
    <property type="pathway name" value="HIV elongation arrest and recovery"/>
</dbReference>
<dbReference type="Reactome" id="R-HSA-167290">
    <property type="pathway name" value="Pausing and recovery of HIV elongation"/>
</dbReference>
<dbReference type="Reactome" id="R-HSA-168325">
    <property type="pathway name" value="Viral Messenger RNA Synthesis"/>
</dbReference>
<dbReference type="Reactome" id="R-HSA-203927">
    <property type="pathway name" value="MicroRNA (miRNA) biogenesis"/>
</dbReference>
<dbReference type="Reactome" id="R-HSA-5578749">
    <property type="pathway name" value="Transcriptional regulation by small RNAs"/>
</dbReference>
<dbReference type="Reactome" id="R-HSA-5601884">
    <property type="pathway name" value="PIWI-interacting RNA (piRNA) biogenesis"/>
</dbReference>
<dbReference type="Reactome" id="R-HSA-5617472">
    <property type="pathway name" value="Activation of anterior HOX genes in hindbrain development during early embryogenesis"/>
</dbReference>
<dbReference type="Reactome" id="R-HSA-674695">
    <property type="pathway name" value="RNA Polymerase II Pre-transcription Events"/>
</dbReference>
<dbReference type="Reactome" id="R-HSA-6781823">
    <property type="pathway name" value="Formation of TC-NER Pre-Incision Complex"/>
</dbReference>
<dbReference type="Reactome" id="R-HSA-6781827">
    <property type="pathway name" value="Transcription-Coupled Nucleotide Excision Repair (TC-NER)"/>
</dbReference>
<dbReference type="Reactome" id="R-HSA-6782135">
    <property type="pathway name" value="Dual incision in TC-NER"/>
</dbReference>
<dbReference type="Reactome" id="R-HSA-6782210">
    <property type="pathway name" value="Gap-filling DNA repair synthesis and ligation in TC-NER"/>
</dbReference>
<dbReference type="Reactome" id="R-HSA-6796648">
    <property type="pathway name" value="TP53 Regulates Transcription of DNA Repair Genes"/>
</dbReference>
<dbReference type="Reactome" id="R-HSA-6803529">
    <property type="pathway name" value="FGFR2 alternative splicing"/>
</dbReference>
<dbReference type="Reactome" id="R-HSA-6807505">
    <property type="pathway name" value="RNA polymerase II transcribes snRNA genes"/>
</dbReference>
<dbReference type="Reactome" id="R-HSA-72086">
    <property type="pathway name" value="mRNA Capping"/>
</dbReference>
<dbReference type="Reactome" id="R-HSA-72163">
    <property type="pathway name" value="mRNA Splicing - Major Pathway"/>
</dbReference>
<dbReference type="Reactome" id="R-HSA-72165">
    <property type="pathway name" value="mRNA Splicing - Minor Pathway"/>
</dbReference>
<dbReference type="Reactome" id="R-HSA-72203">
    <property type="pathway name" value="Processing of Capped Intron-Containing Pre-mRNA"/>
</dbReference>
<dbReference type="Reactome" id="R-HSA-73776">
    <property type="pathway name" value="RNA Polymerase II Promoter Escape"/>
</dbReference>
<dbReference type="Reactome" id="R-HSA-73779">
    <property type="pathway name" value="RNA Polymerase II Transcription Pre-Initiation And Promoter Opening"/>
</dbReference>
<dbReference type="Reactome" id="R-HSA-75953">
    <property type="pathway name" value="RNA Polymerase II Transcription Initiation"/>
</dbReference>
<dbReference type="Reactome" id="R-HSA-75955">
    <property type="pathway name" value="RNA Polymerase II Transcription Elongation"/>
</dbReference>
<dbReference type="Reactome" id="R-HSA-76042">
    <property type="pathway name" value="RNA Polymerase II Transcription Initiation And Promoter Clearance"/>
</dbReference>
<dbReference type="Reactome" id="R-HSA-77075">
    <property type="pathway name" value="RNA Pol II CTD phosphorylation and interaction with CE"/>
</dbReference>
<dbReference type="Reactome" id="R-HSA-8851708">
    <property type="pathway name" value="Signaling by FGFR2 IIIa TM"/>
</dbReference>
<dbReference type="Reactome" id="R-HSA-9018519">
    <property type="pathway name" value="Estrogen-dependent gene expression"/>
</dbReference>
<dbReference type="Reactome" id="R-HSA-9670095">
    <property type="pathway name" value="Inhibition of DNA recombination at telomere"/>
</dbReference>
<dbReference type="SignaLink" id="P19387"/>
<dbReference type="SIGNOR" id="P19387"/>
<dbReference type="BioGRID-ORCS" id="5432">
    <property type="hits" value="837 hits in 1163 CRISPR screens"/>
</dbReference>
<dbReference type="ChiTaRS" id="POLR2C">
    <property type="organism name" value="human"/>
</dbReference>
<dbReference type="EvolutionaryTrace" id="P19387"/>
<dbReference type="GeneWiki" id="POLR2C"/>
<dbReference type="GenomeRNAi" id="5432"/>
<dbReference type="Pharos" id="P19387">
    <property type="development level" value="Tbio"/>
</dbReference>
<dbReference type="PRO" id="PR:P19387"/>
<dbReference type="Proteomes" id="UP000005640">
    <property type="component" value="Chromosome 16"/>
</dbReference>
<dbReference type="RNAct" id="P19387">
    <property type="molecule type" value="protein"/>
</dbReference>
<dbReference type="Bgee" id="ENSG00000102978">
    <property type="expression patterns" value="Expressed in islet of Langerhans and 211 other cell types or tissues"/>
</dbReference>
<dbReference type="ExpressionAtlas" id="P19387">
    <property type="expression patterns" value="baseline and differential"/>
</dbReference>
<dbReference type="GO" id="GO:0005829">
    <property type="term" value="C:cytosol"/>
    <property type="evidence" value="ECO:0000314"/>
    <property type="project" value="HPA"/>
</dbReference>
<dbReference type="GO" id="GO:0005654">
    <property type="term" value="C:nucleoplasm"/>
    <property type="evidence" value="ECO:0000314"/>
    <property type="project" value="HPA"/>
</dbReference>
<dbReference type="GO" id="GO:0005634">
    <property type="term" value="C:nucleus"/>
    <property type="evidence" value="ECO:0000314"/>
    <property type="project" value="UniProtKB"/>
</dbReference>
<dbReference type="GO" id="GO:0005665">
    <property type="term" value="C:RNA polymerase II, core complex"/>
    <property type="evidence" value="ECO:0000314"/>
    <property type="project" value="UniProtKB"/>
</dbReference>
<dbReference type="GO" id="GO:0003677">
    <property type="term" value="F:DNA binding"/>
    <property type="evidence" value="ECO:0007669"/>
    <property type="project" value="InterPro"/>
</dbReference>
<dbReference type="GO" id="GO:0003899">
    <property type="term" value="F:DNA-directed RNA polymerase activity"/>
    <property type="evidence" value="ECO:0007669"/>
    <property type="project" value="InterPro"/>
</dbReference>
<dbReference type="GO" id="GO:0046983">
    <property type="term" value="F:protein dimerization activity"/>
    <property type="evidence" value="ECO:0007669"/>
    <property type="project" value="InterPro"/>
</dbReference>
<dbReference type="GO" id="GO:0006366">
    <property type="term" value="P:transcription by RNA polymerase II"/>
    <property type="evidence" value="ECO:0000314"/>
    <property type="project" value="UniProtKB"/>
</dbReference>
<dbReference type="CDD" id="cd07031">
    <property type="entry name" value="RNAP_II_RPB3"/>
    <property type="match status" value="1"/>
</dbReference>
<dbReference type="FunFam" id="2.170.120.12:FF:000002">
    <property type="entry name" value="DNA-directed RNA polymerase II subunit RPB3"/>
    <property type="match status" value="1"/>
</dbReference>
<dbReference type="FunFam" id="3.30.1360.10:FF:000024">
    <property type="entry name" value="DNA-directed RNA polymerase II subunit RPB3"/>
    <property type="match status" value="1"/>
</dbReference>
<dbReference type="Gene3D" id="2.170.120.12">
    <property type="entry name" value="DNA-directed RNA polymerase, insert domain"/>
    <property type="match status" value="1"/>
</dbReference>
<dbReference type="Gene3D" id="3.30.1360.10">
    <property type="entry name" value="RNA polymerase, RBP11-like subunit"/>
    <property type="match status" value="1"/>
</dbReference>
<dbReference type="HAMAP" id="MF_00320">
    <property type="entry name" value="RNApol_arch_Rpo3"/>
    <property type="match status" value="1"/>
</dbReference>
<dbReference type="InterPro" id="IPR001514">
    <property type="entry name" value="DNA-dir_RNA_pol_30-40kDasu_CS"/>
</dbReference>
<dbReference type="InterPro" id="IPR011262">
    <property type="entry name" value="DNA-dir_RNA_pol_insert"/>
</dbReference>
<dbReference type="InterPro" id="IPR011263">
    <property type="entry name" value="DNA-dir_RNA_pol_RpoA/D/Rpb3"/>
</dbReference>
<dbReference type="InterPro" id="IPR036603">
    <property type="entry name" value="RBP11-like"/>
</dbReference>
<dbReference type="InterPro" id="IPR022842">
    <property type="entry name" value="RNAP_Rpo3/Rpb3/RPAC1"/>
</dbReference>
<dbReference type="InterPro" id="IPR036643">
    <property type="entry name" value="RNApol_insert_sf"/>
</dbReference>
<dbReference type="InterPro" id="IPR050518">
    <property type="entry name" value="Rpo3/RPB3_RNA_Pol_subunit"/>
</dbReference>
<dbReference type="NCBIfam" id="NF001988">
    <property type="entry name" value="PRK00783.1"/>
    <property type="match status" value="1"/>
</dbReference>
<dbReference type="PANTHER" id="PTHR11800">
    <property type="entry name" value="DNA-DIRECTED RNA POLYMERASE"/>
    <property type="match status" value="1"/>
</dbReference>
<dbReference type="PANTHER" id="PTHR11800:SF2">
    <property type="entry name" value="DNA-DIRECTED RNA POLYMERASE II SUBUNIT RPB3"/>
    <property type="match status" value="1"/>
</dbReference>
<dbReference type="Pfam" id="PF01000">
    <property type="entry name" value="RNA_pol_A_bac"/>
    <property type="match status" value="1"/>
</dbReference>
<dbReference type="Pfam" id="PF01193">
    <property type="entry name" value="RNA_pol_L"/>
    <property type="match status" value="1"/>
</dbReference>
<dbReference type="SMART" id="SM00662">
    <property type="entry name" value="RPOLD"/>
    <property type="match status" value="1"/>
</dbReference>
<dbReference type="SUPFAM" id="SSF56553">
    <property type="entry name" value="Insert subdomain of RNA polymerase alpha subunit"/>
    <property type="match status" value="1"/>
</dbReference>
<dbReference type="SUPFAM" id="SSF55257">
    <property type="entry name" value="RBP11-like subunits of RNA polymerase"/>
    <property type="match status" value="1"/>
</dbReference>
<dbReference type="PROSITE" id="PS00446">
    <property type="entry name" value="RNA_POL_D_30KD"/>
    <property type="match status" value="1"/>
</dbReference>
<protein>
    <recommendedName>
        <fullName evidence="8">DNA-directed RNA polymerase II subunit RPB3</fullName>
        <shortName>RNA polymerase II subunit 3</shortName>
        <shortName>RNA polymerase II subunit B3</shortName>
    </recommendedName>
    <alternativeName>
        <fullName>DNA-directed RNA polymerase II 33 kDa polypeptide</fullName>
        <shortName>RPB33</shortName>
    </alternativeName>
    <alternativeName>
        <fullName>DNA-directed RNA polymerase II subunit C</fullName>
    </alternativeName>
    <alternativeName>
        <fullName evidence="1">RPB31</fullName>
    </alternativeName>
</protein>
<feature type="initiator methionine" description="Removed" evidence="7">
    <location>
        <position position="1"/>
    </location>
</feature>
<feature type="chain" id="PRO_0000132743" description="DNA-directed RNA polymerase II subunit RPB3">
    <location>
        <begin position="2"/>
        <end position="275"/>
    </location>
</feature>
<feature type="region of interest" description="Disordered" evidence="2">
    <location>
        <begin position="203"/>
        <end position="226"/>
    </location>
</feature>
<feature type="binding site" evidence="3 10">
    <location>
        <position position="88"/>
    </location>
    <ligand>
        <name>Zn(2+)</name>
        <dbReference type="ChEBI" id="CHEBI:29105"/>
    </ligand>
</feature>
<feature type="binding site" evidence="3 10">
    <location>
        <position position="90"/>
    </location>
    <ligand>
        <name>Zn(2+)</name>
        <dbReference type="ChEBI" id="CHEBI:29105"/>
    </ligand>
</feature>
<feature type="binding site" evidence="3 10">
    <location>
        <position position="94"/>
    </location>
    <ligand>
        <name>Zn(2+)</name>
        <dbReference type="ChEBI" id="CHEBI:29105"/>
    </ligand>
</feature>
<feature type="binding site" evidence="3 10">
    <location>
        <position position="97"/>
    </location>
    <ligand>
        <name>Zn(2+)</name>
        <dbReference type="ChEBI" id="CHEBI:29105"/>
    </ligand>
</feature>
<feature type="modified residue" description="Phosphoserine" evidence="11">
    <location>
        <position position="124"/>
    </location>
</feature>
<feature type="modified residue" description="Phosphoserine" evidence="12">
    <location>
        <position position="257"/>
    </location>
</feature>
<feature type="sequence conflict" description="In Ref. 1 and 3." evidence="8" ref="1 3">
    <original>H</original>
    <variation>T</variation>
    <location>
        <position position="194"/>
    </location>
</feature>
<sequence>MPYANQPTVRITELTDENVKFIIENTDLAVANSIRRVFIAEVPIIAIDWVQIDANSSVLHDEFIAHRLGLIPLISDDIVDKLQYSRDCTCEEFCPECSVEFTLDVRCNEDQTRHVTSRDLISNSPRVIPVTSRNRDNDPNDYVEQDDILIVKLRKGQELRLRAYAKKGFGKEHAKWNPTAGVAFEYDPDNALRHTVYPKPEEWPKSEYSELDEDESQAPYDPNGKPERFYYNVESCGSLRPETIVLSALSGLKKKLSDLQTQLSHEIQSDVLTIN</sequence>